<dbReference type="EC" id="3.5.1.5" evidence="3 6 10"/>
<dbReference type="EMBL" id="AF006062">
    <property type="protein sequence ID" value="AAC62257.1"/>
    <property type="molecule type" value="Genomic_DNA"/>
</dbReference>
<dbReference type="EMBL" id="CP003833">
    <property type="protein sequence ID" value="AFR98966.2"/>
    <property type="status" value="ALT_SEQ"/>
    <property type="molecule type" value="Genomic_DNA"/>
</dbReference>
<dbReference type="RefSeq" id="XP_012053644.1">
    <property type="nucleotide sequence ID" value="XM_012198254.1"/>
</dbReference>
<dbReference type="SMR" id="O13465"/>
<dbReference type="GeneID" id="23888844"/>
<dbReference type="KEGG" id="cng:CNAG_05540"/>
<dbReference type="HOGENOM" id="CLU_000980_0_0_1"/>
<dbReference type="OrthoDB" id="2638at5206"/>
<dbReference type="UniPathway" id="UPA00258">
    <property type="reaction ID" value="UER00370"/>
</dbReference>
<dbReference type="PHI-base" id="PHI:194"/>
<dbReference type="Proteomes" id="UP000010091">
    <property type="component" value="Chromosome 14"/>
</dbReference>
<dbReference type="GO" id="GO:0035550">
    <property type="term" value="C:urease complex"/>
    <property type="evidence" value="ECO:0007669"/>
    <property type="project" value="InterPro"/>
</dbReference>
<dbReference type="GO" id="GO:0016151">
    <property type="term" value="F:nickel cation binding"/>
    <property type="evidence" value="ECO:0007669"/>
    <property type="project" value="InterPro"/>
</dbReference>
<dbReference type="GO" id="GO:0009039">
    <property type="term" value="F:urease activity"/>
    <property type="evidence" value="ECO:0007669"/>
    <property type="project" value="UniProtKB-EC"/>
</dbReference>
<dbReference type="GO" id="GO:0043419">
    <property type="term" value="P:urea catabolic process"/>
    <property type="evidence" value="ECO:0007669"/>
    <property type="project" value="UniProtKB-UniPathway"/>
</dbReference>
<dbReference type="CDD" id="cd00375">
    <property type="entry name" value="Urease_alpha"/>
    <property type="match status" value="1"/>
</dbReference>
<dbReference type="CDD" id="cd00407">
    <property type="entry name" value="Urease_beta"/>
    <property type="match status" value="1"/>
</dbReference>
<dbReference type="CDD" id="cd00390">
    <property type="entry name" value="Urease_gamma"/>
    <property type="match status" value="1"/>
</dbReference>
<dbReference type="FunFam" id="3.30.280.10:FF:000001">
    <property type="entry name" value="Urease subunit alpha"/>
    <property type="match status" value="1"/>
</dbReference>
<dbReference type="Gene3D" id="3.20.20.140">
    <property type="entry name" value="Metal-dependent hydrolases"/>
    <property type="match status" value="1"/>
</dbReference>
<dbReference type="Gene3D" id="2.10.150.10">
    <property type="entry name" value="Urease, beta subunit"/>
    <property type="match status" value="1"/>
</dbReference>
<dbReference type="Gene3D" id="3.30.280.10">
    <property type="entry name" value="Urease, gamma-like subunit"/>
    <property type="match status" value="1"/>
</dbReference>
<dbReference type="Gene3D" id="2.30.40.10">
    <property type="entry name" value="Urease, subunit C, domain 1"/>
    <property type="match status" value="1"/>
</dbReference>
<dbReference type="HAMAP" id="MF_01953">
    <property type="entry name" value="Urease_alpha"/>
    <property type="match status" value="1"/>
</dbReference>
<dbReference type="InterPro" id="IPR006680">
    <property type="entry name" value="Amidohydro-rel"/>
</dbReference>
<dbReference type="InterPro" id="IPR011059">
    <property type="entry name" value="Metal-dep_hydrolase_composite"/>
</dbReference>
<dbReference type="InterPro" id="IPR032466">
    <property type="entry name" value="Metal_Hydrolase"/>
</dbReference>
<dbReference type="InterPro" id="IPR008221">
    <property type="entry name" value="Urease"/>
</dbReference>
<dbReference type="InterPro" id="IPR011612">
    <property type="entry name" value="Urease_alpha_N_dom"/>
</dbReference>
<dbReference type="InterPro" id="IPR017950">
    <property type="entry name" value="Urease_AS"/>
</dbReference>
<dbReference type="InterPro" id="IPR005848">
    <property type="entry name" value="Urease_asu"/>
</dbReference>
<dbReference type="InterPro" id="IPR017951">
    <property type="entry name" value="Urease_asu_c"/>
</dbReference>
<dbReference type="InterPro" id="IPR002019">
    <property type="entry name" value="Urease_beta-like"/>
</dbReference>
<dbReference type="InterPro" id="IPR036461">
    <property type="entry name" value="Urease_betasu_sf"/>
</dbReference>
<dbReference type="InterPro" id="IPR002026">
    <property type="entry name" value="Urease_gamma/gamma-beta_su"/>
</dbReference>
<dbReference type="InterPro" id="IPR036463">
    <property type="entry name" value="Urease_gamma_sf"/>
</dbReference>
<dbReference type="InterPro" id="IPR029754">
    <property type="entry name" value="Urease_Ni-bd"/>
</dbReference>
<dbReference type="InterPro" id="IPR050069">
    <property type="entry name" value="Urease_subunit"/>
</dbReference>
<dbReference type="NCBIfam" id="NF009671">
    <property type="entry name" value="PRK13192.1"/>
    <property type="match status" value="1"/>
</dbReference>
<dbReference type="NCBIfam" id="NF009686">
    <property type="entry name" value="PRK13207.1"/>
    <property type="match status" value="1"/>
</dbReference>
<dbReference type="NCBIfam" id="TIGR01792">
    <property type="entry name" value="urease_alph"/>
    <property type="match status" value="1"/>
</dbReference>
<dbReference type="NCBIfam" id="TIGR00192">
    <property type="entry name" value="urease_beta"/>
    <property type="match status" value="1"/>
</dbReference>
<dbReference type="NCBIfam" id="TIGR00193">
    <property type="entry name" value="urease_gam"/>
    <property type="match status" value="1"/>
</dbReference>
<dbReference type="PANTHER" id="PTHR33569">
    <property type="entry name" value="UREASE"/>
    <property type="match status" value="1"/>
</dbReference>
<dbReference type="PANTHER" id="PTHR33569:SF1">
    <property type="entry name" value="UREASE"/>
    <property type="match status" value="1"/>
</dbReference>
<dbReference type="Pfam" id="PF01979">
    <property type="entry name" value="Amidohydro_1"/>
    <property type="match status" value="1"/>
</dbReference>
<dbReference type="Pfam" id="PF00449">
    <property type="entry name" value="Urease_alpha"/>
    <property type="match status" value="1"/>
</dbReference>
<dbReference type="Pfam" id="PF00699">
    <property type="entry name" value="Urease_beta"/>
    <property type="match status" value="1"/>
</dbReference>
<dbReference type="Pfam" id="PF00547">
    <property type="entry name" value="Urease_gamma"/>
    <property type="match status" value="1"/>
</dbReference>
<dbReference type="PIRSF" id="PIRSF001222">
    <property type="entry name" value="Urease"/>
    <property type="match status" value="1"/>
</dbReference>
<dbReference type="PRINTS" id="PR01752">
    <property type="entry name" value="UREASE"/>
</dbReference>
<dbReference type="SUPFAM" id="SSF51338">
    <property type="entry name" value="Composite domain of metallo-dependent hydrolases"/>
    <property type="match status" value="1"/>
</dbReference>
<dbReference type="SUPFAM" id="SSF51556">
    <property type="entry name" value="Metallo-dependent hydrolases"/>
    <property type="match status" value="1"/>
</dbReference>
<dbReference type="SUPFAM" id="SSF51278">
    <property type="entry name" value="Urease, beta-subunit"/>
    <property type="match status" value="1"/>
</dbReference>
<dbReference type="SUPFAM" id="SSF54111">
    <property type="entry name" value="Urease, gamma-subunit"/>
    <property type="match status" value="1"/>
</dbReference>
<dbReference type="PROSITE" id="PS01120">
    <property type="entry name" value="UREASE_1"/>
    <property type="match status" value="1"/>
</dbReference>
<dbReference type="PROSITE" id="PS00145">
    <property type="entry name" value="UREASE_2"/>
    <property type="match status" value="1"/>
</dbReference>
<dbReference type="PROSITE" id="PS51368">
    <property type="entry name" value="UREASE_3"/>
    <property type="match status" value="1"/>
</dbReference>
<gene>
    <name evidence="11" type="primary">URE1</name>
    <name type="ORF">CNAG_05540</name>
</gene>
<protein>
    <recommendedName>
        <fullName evidence="3">Urease</fullName>
        <ecNumber evidence="3 6 10">3.5.1.5</ecNumber>
    </recommendedName>
    <alternativeName>
        <fullName evidence="3">Urea amidohydrolase</fullName>
    </alternativeName>
</protein>
<organism>
    <name type="scientific">Cryptococcus neoformans var. grubii serotype A (strain H99 / ATCC 208821 / CBS 10515 / FGSC 9487)</name>
    <name type="common">Filobasidiella neoformans var. grubii</name>
    <dbReference type="NCBI Taxonomy" id="235443"/>
    <lineage>
        <taxon>Eukaryota</taxon>
        <taxon>Fungi</taxon>
        <taxon>Dikarya</taxon>
        <taxon>Basidiomycota</taxon>
        <taxon>Agaricomycotina</taxon>
        <taxon>Tremellomycetes</taxon>
        <taxon>Tremellales</taxon>
        <taxon>Cryptococcaceae</taxon>
        <taxon>Cryptococcus</taxon>
        <taxon>Cryptococcus neoformans species complex</taxon>
    </lineage>
</organism>
<sequence>MHLLPRETDKLILTTLGTLAQRRLARGLILNRAETIALISSQLQEFVRDGRHSVAELMDLGKKMLGRRHVRKGVPESIHTIQVEGTFPDGVFLVTVDDPISSDDGDLNNAFYGSFLPIPSADVFPAAPEPADTLLGALICRKETVKINASRRRFRLEVKNAGDRPVQVGSHYHFLETNPALIFDRLLSYGYHLDIPAGTAVRFEPGEKKTVTMVEFGGKKIFHGGSGLGNGSFDENLRETKVKEMVEKGGFGHKEQEKIEEGPVTEMNREVYASMFGPTTGDKIKLADMDLWIEVEKDYTVYGDECKFGGGKVIRDGGGQASGRHDHEVLDLVITNALIVDWTGIYKADIGVKNGIIVGIGKAGNPDMMDGVTDGMIVGSSTEVISGEKLITTAGALDVHVHYISPQLMTEALASGITTVIGGGTGPADGSNATTCTSSSFYMQNMIKATDTIPLNFGFTGKGSDSGTNAMRDIIEAGACGLKVHEDWGATPEVIDRALSMADEYDVQINLHSDTLNESGYVESTLAAIKGRTIHSYHTEGAGGGHAPDIIVVCEYENVLPSSTNPTRPYAVNTLDEHLDMLMICHGLDKSIPEDIAFADSRIRSETVAAEDVLQDTGAISMISSDCQAMGRIGEVVTRTWRTAAKMKQFRGPLEGDEPTRDNNRVKRYVAKYTINPAITHGMSHLIGQVAVGCLADLVFWTAESFGARPEMILKGGVIAWAAVGDANASIPTVQPVLGRPMWGSQPEAAALNSIVWVSQASLDKDLVKRFNIKKRAEAVKNCRSIGKKDMKWNDTMPKMTVDPETYDVRADGVLCDVPPADKLPLTRRYFVY</sequence>
<feature type="chain" id="PRO_0000067528" description="Urease">
    <location>
        <begin position="1"/>
        <end position="833"/>
    </location>
</feature>
<feature type="domain" description="Urease" evidence="3">
    <location>
        <begin position="395"/>
        <end position="833"/>
    </location>
</feature>
<feature type="active site" description="Proton donor" evidence="3">
    <location>
        <position position="586"/>
    </location>
</feature>
<feature type="binding site" evidence="3">
    <location>
        <position position="400"/>
    </location>
    <ligand>
        <name>Ni(2+)</name>
        <dbReference type="ChEBI" id="CHEBI:49786"/>
        <label>1</label>
    </ligand>
</feature>
<feature type="binding site" evidence="3">
    <location>
        <position position="402"/>
    </location>
    <ligand>
        <name>Ni(2+)</name>
        <dbReference type="ChEBI" id="CHEBI:49786"/>
        <label>1</label>
    </ligand>
</feature>
<feature type="binding site" evidence="2">
    <location>
        <position position="402"/>
    </location>
    <ligand>
        <name>urea</name>
        <dbReference type="ChEBI" id="CHEBI:16199"/>
    </ligand>
</feature>
<feature type="binding site" evidence="2">
    <location>
        <position position="433"/>
    </location>
    <ligand>
        <name>urea</name>
        <dbReference type="ChEBI" id="CHEBI:16199"/>
    </ligand>
</feature>
<feature type="binding site" description="via carbamate group" evidence="3">
    <location>
        <position position="483"/>
    </location>
    <ligand>
        <name>Ni(2+)</name>
        <dbReference type="ChEBI" id="CHEBI:49786"/>
        <label>1</label>
    </ligand>
</feature>
<feature type="binding site" description="via carbamate group" evidence="3">
    <location>
        <position position="483"/>
    </location>
    <ligand>
        <name>Ni(2+)</name>
        <dbReference type="ChEBI" id="CHEBI:49786"/>
        <label>2</label>
    </ligand>
</feature>
<feature type="binding site" evidence="3">
    <location>
        <position position="485"/>
    </location>
    <ligand>
        <name>urea</name>
        <dbReference type="ChEBI" id="CHEBI:16199"/>
    </ligand>
</feature>
<feature type="binding site" evidence="3">
    <location>
        <position position="512"/>
    </location>
    <ligand>
        <name>Ni(2+)</name>
        <dbReference type="ChEBI" id="CHEBI:49786"/>
        <label>2</label>
    </ligand>
</feature>
<feature type="binding site" evidence="2">
    <location>
        <position position="512"/>
    </location>
    <ligand>
        <name>urea</name>
        <dbReference type="ChEBI" id="CHEBI:16199"/>
    </ligand>
</feature>
<feature type="binding site" evidence="3">
    <location>
        <position position="538"/>
    </location>
    <ligand>
        <name>Ni(2+)</name>
        <dbReference type="ChEBI" id="CHEBI:49786"/>
        <label>2</label>
    </ligand>
</feature>
<feature type="binding site" evidence="3">
    <location>
        <position position="626"/>
    </location>
    <ligand>
        <name>Ni(2+)</name>
        <dbReference type="ChEBI" id="CHEBI:49786"/>
        <label>1</label>
    </ligand>
</feature>
<feature type="binding site" evidence="2">
    <location>
        <position position="629"/>
    </location>
    <ligand>
        <name>urea</name>
        <dbReference type="ChEBI" id="CHEBI:16199"/>
    </ligand>
</feature>
<feature type="modified residue" description="N6-carboxylysine" evidence="1">
    <location>
        <position position="483"/>
    </location>
</feature>
<feature type="sequence conflict" description="In Ref. 1; AAC62257." evidence="12" ref="1">
    <original>G</original>
    <variation>V</variation>
    <location>
        <position position="249"/>
    </location>
</feature>
<feature type="sequence conflict" description="In Ref. 1; AAC62257." evidence="12" ref="1">
    <original>A</original>
    <variation>R</variation>
    <location>
        <position position="396"/>
    </location>
</feature>
<feature type="sequence conflict" description="In Ref. 1; AAC62257." evidence="12" ref="1">
    <original>P</original>
    <variation>A</variation>
    <location>
        <position position="492"/>
    </location>
</feature>
<feature type="sequence conflict" description="In Ref. 1; AAC62257." evidence="12" ref="1">
    <original>FWTA</original>
    <variation>LLDG</variation>
    <location>
        <begin position="700"/>
        <end position="703"/>
    </location>
</feature>
<feature type="sequence conflict" description="In Ref. 1; AAC62257." evidence="12" ref="1">
    <original>GSQPEAAALNSIVW</original>
    <variation>ALSLRPLHSIQLF</variation>
    <location>
        <begin position="744"/>
        <end position="757"/>
    </location>
</feature>
<feature type="sequence conflict" description="In Ref. 1; AAC62257." evidence="12" ref="1">
    <original>FNIK</original>
    <variation>YRLR</variation>
    <location>
        <begin position="771"/>
        <end position="774"/>
    </location>
</feature>
<name>UREA_CRYNH</name>
<reference key="1">
    <citation type="journal article" date="2000" name="Infect. Immun.">
        <title>Urease as a virulence factor in experimental cryptococcosis.</title>
        <authorList>
            <person name="Cox G.M."/>
            <person name="Mukherjee J."/>
            <person name="Cole G.T."/>
            <person name="Casadevall A."/>
            <person name="Perfect J.R."/>
        </authorList>
    </citation>
    <scope>NUCLEOTIDE SEQUENCE [GENOMIC DNA]</scope>
    <scope>FUNCTION</scope>
    <scope>DISRUPTION PHENOTYPE</scope>
    <source>
        <strain>H99 / ATCC 208821 / CBS 10515 / FGSC 9487</strain>
    </source>
</reference>
<reference key="2">
    <citation type="journal article" date="2014" name="PLoS Genet.">
        <title>Analysis of the genome and transcriptome of Cryptococcus neoformans var. grubii reveals complex RNA expression and microevolution leading to virulence attenuation.</title>
        <authorList>
            <person name="Janbon G."/>
            <person name="Ormerod K.L."/>
            <person name="Paulet D."/>
            <person name="Byrnes E.J. III"/>
            <person name="Yadav V."/>
            <person name="Chatterjee G."/>
            <person name="Mullapudi N."/>
            <person name="Hon C.-C."/>
            <person name="Billmyre R.B."/>
            <person name="Brunel F."/>
            <person name="Bahn Y.-S."/>
            <person name="Chen W."/>
            <person name="Chen Y."/>
            <person name="Chow E.W.L."/>
            <person name="Coppee J.-Y."/>
            <person name="Floyd-Averette A."/>
            <person name="Gaillardin C."/>
            <person name="Gerik K.J."/>
            <person name="Goldberg J."/>
            <person name="Gonzalez-Hilarion S."/>
            <person name="Gujja S."/>
            <person name="Hamlin J.L."/>
            <person name="Hsueh Y.-P."/>
            <person name="Ianiri G."/>
            <person name="Jones S."/>
            <person name="Kodira C.D."/>
            <person name="Kozubowski L."/>
            <person name="Lam W."/>
            <person name="Marra M."/>
            <person name="Mesner L.D."/>
            <person name="Mieczkowski P.A."/>
            <person name="Moyrand F."/>
            <person name="Nielsen K."/>
            <person name="Proux C."/>
            <person name="Rossignol T."/>
            <person name="Schein J.E."/>
            <person name="Sun S."/>
            <person name="Wollschlaeger C."/>
            <person name="Wood I.A."/>
            <person name="Zeng Q."/>
            <person name="Neuveglise C."/>
            <person name="Newlon C.S."/>
            <person name="Perfect J.R."/>
            <person name="Lodge J.K."/>
            <person name="Idnurm A."/>
            <person name="Stajich J.E."/>
            <person name="Kronstad J.W."/>
            <person name="Sanyal K."/>
            <person name="Heitman J."/>
            <person name="Fraser J.A."/>
            <person name="Cuomo C.A."/>
            <person name="Dietrich F.S."/>
        </authorList>
    </citation>
    <scope>NUCLEOTIDE SEQUENCE [LARGE SCALE GENOMIC DNA]</scope>
    <source>
        <strain>H99 / ATCC 208821 / CBS 10515 / FGSC 9487</strain>
    </source>
</reference>
<reference key="3">
    <citation type="journal article" date="1979" name="J. Clin. Microbiol.">
        <title>Rapid selective urease test for presumptive identification of Cryptococcus neoformans.</title>
        <authorList>
            <person name="Zimmer B.L."/>
            <person name="Roberts G.D."/>
        </authorList>
    </citation>
    <scope>FUNCTION</scope>
    <scope>CATALYTIC ACTIVITY</scope>
</reference>
<reference key="4">
    <citation type="journal article" date="2004" name="Am. J. Pathol.">
        <title>Urease expression by Cryptococcus neoformans promotes microvascular sequestration, thereby enhancing central nervous system invasion.</title>
        <authorList>
            <person name="Olszewski M.A."/>
            <person name="Noverr M.C."/>
            <person name="Chen G.H."/>
            <person name="Toews G.B."/>
            <person name="Cox G.M."/>
            <person name="Perfect J.R."/>
            <person name="Huffnagle G.B."/>
        </authorList>
    </citation>
    <scope>FUNCTION</scope>
</reference>
<reference key="5">
    <citation type="journal article" date="2013" name="MBio">
        <title>Factors required for activation of urease as a virulence determinant in Cryptococcus neoformans.</title>
        <authorList>
            <person name="Singh A."/>
            <person name="Panting R.J."/>
            <person name="Varma A."/>
            <person name="Saijo T."/>
            <person name="Waldron K.J."/>
            <person name="Jong A."/>
            <person name="Ngamskulrungroj P."/>
            <person name="Chang Y.C."/>
            <person name="Rutherford J.C."/>
            <person name="Kwon-Chung K.J."/>
        </authorList>
    </citation>
    <scope>INDUCTION</scope>
    <scope>CATALYTIC ACTIVITY</scope>
    <scope>COFACTOR</scope>
    <scope>ACTIVITY REGULATION</scope>
</reference>
<reference key="6">
    <citation type="journal article" date="2018" name="PLoS Pathog.">
        <title>Cryptococcus neoformans urease affects the outcome of intracellular pathogenesis by modulating phagolysosomal pH.</title>
        <authorList>
            <person name="Fu M.S."/>
            <person name="Coelho C."/>
            <person name="De Leon-Rodriguez C.M."/>
            <person name="Rossi D.C.P."/>
            <person name="Camacho E."/>
            <person name="Jung E.H."/>
            <person name="Kulkarni M."/>
            <person name="Casadevall A."/>
        </authorList>
    </citation>
    <scope>FUNCTION</scope>
    <scope>DISRUPTION PHENOTYPE</scope>
</reference>
<reference key="7">
    <citation type="journal article" date="2020" name="FEMS Yeast Res.">
        <title>The virulence factor urease and its unexplored role in the metabolism of Cryptococcus neoformans.</title>
        <authorList>
            <person name="Toplis B."/>
            <person name="Bosch C."/>
            <person name="Schwartz I.S."/>
            <person name="Kenyon C."/>
            <person name="Boekhout T."/>
            <person name="Perfect J.R."/>
            <person name="Botha A."/>
        </authorList>
    </citation>
    <scope>FUNCTION</scope>
    <scope>DISRUPTION PHENOTYPE</scope>
</reference>
<reference key="8">
    <citation type="journal article" date="2021" name="Microb. Pathog.">
        <title>A link between urease and polyamine metabolism in Cryptococcus neoformans.</title>
        <authorList>
            <person name="Toplis B."/>
            <person name="Bosch C."/>
            <person name="Stander M."/>
            <person name="Taylor M."/>
            <person name="Perfect J.R."/>
            <person name="Botha A."/>
        </authorList>
    </citation>
    <scope>FUNCTION</scope>
    <scope>DISRUPTION PHENOTYPE</scope>
</reference>
<evidence type="ECO:0000250" key="1">
    <source>
        <dbReference type="UniProtKB" id="P07374"/>
    </source>
</evidence>
<evidence type="ECO:0000250" key="2">
    <source>
        <dbReference type="UniProtKB" id="P41020"/>
    </source>
</evidence>
<evidence type="ECO:0000255" key="3">
    <source>
        <dbReference type="PROSITE-ProRule" id="PRU00700"/>
    </source>
</evidence>
<evidence type="ECO:0000269" key="4">
    <source>
    </source>
</evidence>
<evidence type="ECO:0000269" key="5">
    <source>
    </source>
</evidence>
<evidence type="ECO:0000269" key="6">
    <source>
    </source>
</evidence>
<evidence type="ECO:0000269" key="7">
    <source>
    </source>
</evidence>
<evidence type="ECO:0000269" key="8">
    <source>
    </source>
</evidence>
<evidence type="ECO:0000269" key="9">
    <source>
    </source>
</evidence>
<evidence type="ECO:0000269" key="10">
    <source>
    </source>
</evidence>
<evidence type="ECO:0000303" key="11">
    <source>
    </source>
</evidence>
<evidence type="ECO:0000305" key="12"/>
<keyword id="KW-0378">Hydrolase</keyword>
<keyword id="KW-0479">Metal-binding</keyword>
<keyword id="KW-0533">Nickel</keyword>
<keyword id="KW-0843">Virulence</keyword>
<accession>O13465</accession>
<accession>J9VZV0</accession>
<comment type="function">
    <text evidence="5 7 8 9">Plays a nutritional role via nitrogen acquisition in the environment (PubMed:29906292). Contributes to the central nervous system invasion by enhancing yeast sequestration within microcapillary beds (such as within the brain) during hematogenous spread, thereby facilitating blood-to-brain invasion by C.neoformans (PubMed:15111322). Affects fitness within the mammalian phagosome, promoting non-lytic exocytosis while delaying intracellular replication and thus reducing phagolysosomal membrane damage, events that could facilitate cryptococcal dissemination when transported inside macrophages (PubMed:29906292). Urease activity is also associated with the regulation of key intracellular metabolic pathways, including melanin biosynthesis, polyamine biosynthesis, as well as intracellular levels of proline and reactive oxygen species (PubMed:32490521, PubMed:34216740).</text>
</comment>
<comment type="catalytic activity">
    <reaction evidence="3 6 10">
        <text>urea + 2 H2O + H(+) = hydrogencarbonate + 2 NH4(+)</text>
        <dbReference type="Rhea" id="RHEA:20557"/>
        <dbReference type="ChEBI" id="CHEBI:15377"/>
        <dbReference type="ChEBI" id="CHEBI:15378"/>
        <dbReference type="ChEBI" id="CHEBI:16199"/>
        <dbReference type="ChEBI" id="CHEBI:17544"/>
        <dbReference type="ChEBI" id="CHEBI:28938"/>
        <dbReference type="EC" id="3.5.1.5"/>
    </reaction>
    <physiologicalReaction direction="left-to-right" evidence="6 10">
        <dbReference type="Rhea" id="RHEA:20558"/>
    </physiologicalReaction>
</comment>
<comment type="cofactor">
    <cofactor evidence="3 6">
        <name>Ni(2+)</name>
        <dbReference type="ChEBI" id="CHEBI:49786"/>
    </cofactor>
    <text evidence="3 6">Binds 2 Ni(2+) ions per subunit.</text>
</comment>
<comment type="activity regulation">
    <text evidence="6">The urease accessory proteins URE4, URE6 and URE7 are required for urease activity, URE7 supplying nickel for the functional urease.</text>
</comment>
<comment type="pathway">
    <text evidence="6 10">Nitrogen metabolism; urea degradation; CO(2) and NH(3) from urea (urease route): step 1/1.</text>
</comment>
<comment type="subunit">
    <text evidence="1">Homohexamer.</text>
</comment>
<comment type="induction">
    <text evidence="6">Expression is increased when cells are grown on urea.</text>
</comment>
<comment type="PTM">
    <text evidence="1">Carboxylation allows a single lysine to coordinate two nickel ions.</text>
</comment>
<comment type="disruption phenotype">
    <text evidence="4 7 8 9">Does not affect in vitro growth characteristics, phenoloxidase activity, and capsule size (PubMed:10639402). Reduces virulence in a mouse model of cryptococcosis (PubMed:10639402). Leads to lower fungal burden in the brain than mice infected with macrophages carrying wild-type strain, but does not affect survival of yeast when interacting with amoebae (PubMed:29906292). Leads to significantly higher intracellular urea levels and increased arginase activity, which may act as a potential source of endogenous urea (PubMed:32490521). Shows higher melanin levels at 26 degrees Celsius, while the inverse is observed at 37 degrees Celsius (PubMed:32490521). Affects the polyamine biosynthesis and decreases the susceptibility to the polyamine onhibitor cyclohexylamine (PubMed:34216740).</text>
</comment>
<comment type="similarity">
    <text evidence="3">In the C-terminal section; belongs to the metallo-dependent hydrolases superfamily. Urease alpha subunit family.</text>
</comment>
<comment type="sequence caution" evidence="12">
    <conflict type="erroneous gene model prediction">
        <sequence resource="EMBL-CDS" id="AFR98966"/>
    </conflict>
</comment>
<proteinExistence type="evidence at protein level"/>